<protein>
    <recommendedName>
        <fullName evidence="1">Photosystem I P700 chlorophyll a apoprotein A1</fullName>
        <ecNumber evidence="1">1.97.1.12</ecNumber>
    </recommendedName>
    <alternativeName>
        <fullName evidence="1">PsaA</fullName>
    </alternativeName>
</protein>
<proteinExistence type="evidence at protein level"/>
<name>PSAA_ACAM1</name>
<feature type="chain" id="PRO_1000081130" description="Photosystem I P700 chlorophyll a apoprotein A1">
    <location>
        <begin position="1"/>
        <end position="753"/>
    </location>
</feature>
<feature type="transmembrane region" description="Helical; Name=I" evidence="1">
    <location>
        <begin position="73"/>
        <end position="96"/>
    </location>
</feature>
<feature type="transmembrane region" description="Helical; Name=II" evidence="1">
    <location>
        <begin position="159"/>
        <end position="182"/>
    </location>
</feature>
<feature type="transmembrane region" description="Helical; Name=III" evidence="1">
    <location>
        <begin position="198"/>
        <end position="222"/>
    </location>
</feature>
<feature type="transmembrane region" description="Helical; Name=IV" evidence="1">
    <location>
        <begin position="294"/>
        <end position="312"/>
    </location>
</feature>
<feature type="transmembrane region" description="Helical; Name=V" evidence="1">
    <location>
        <begin position="349"/>
        <end position="372"/>
    </location>
</feature>
<feature type="transmembrane region" description="Helical; Name=VI" evidence="1">
    <location>
        <begin position="388"/>
        <end position="414"/>
    </location>
</feature>
<feature type="transmembrane region" description="Helical; Name=VII" evidence="1">
    <location>
        <begin position="436"/>
        <end position="458"/>
    </location>
</feature>
<feature type="transmembrane region" description="Helical; Name=VIII" evidence="1">
    <location>
        <begin position="534"/>
        <end position="552"/>
    </location>
</feature>
<feature type="transmembrane region" description="Helical; Name=IX" evidence="1">
    <location>
        <begin position="592"/>
        <end position="613"/>
    </location>
</feature>
<feature type="transmembrane region" description="Helical; Name=X" evidence="1">
    <location>
        <begin position="667"/>
        <end position="689"/>
    </location>
</feature>
<feature type="transmembrane region" description="Helical; Name=XI" evidence="1">
    <location>
        <begin position="727"/>
        <end position="747"/>
    </location>
</feature>
<feature type="binding site" evidence="1">
    <location>
        <position position="576"/>
    </location>
    <ligand>
        <name>[4Fe-4S] cluster</name>
        <dbReference type="ChEBI" id="CHEBI:49883"/>
        <note>ligand shared between dimeric partners</note>
    </ligand>
</feature>
<feature type="binding site" evidence="1">
    <location>
        <position position="585"/>
    </location>
    <ligand>
        <name>[4Fe-4S] cluster</name>
        <dbReference type="ChEBI" id="CHEBI:49883"/>
        <note>ligand shared between dimeric partners</note>
    </ligand>
</feature>
<feature type="binding site" description="axial binding residue" evidence="1">
    <location>
        <position position="678"/>
    </location>
    <ligand>
        <name>chlorophyll a'</name>
        <dbReference type="ChEBI" id="CHEBI:189419"/>
        <label>A1</label>
    </ligand>
    <ligandPart>
        <name>Mg</name>
        <dbReference type="ChEBI" id="CHEBI:25107"/>
    </ligandPart>
</feature>
<feature type="binding site" description="axial binding residue" evidence="1">
    <location>
        <position position="686"/>
    </location>
    <ligand>
        <name>chlorophyll a</name>
        <dbReference type="ChEBI" id="CHEBI:58416"/>
        <label>A3</label>
    </ligand>
    <ligandPart>
        <name>Mg</name>
        <dbReference type="ChEBI" id="CHEBI:25107"/>
    </ligandPart>
</feature>
<feature type="binding site" evidence="1">
    <location>
        <position position="694"/>
    </location>
    <ligand>
        <name>chlorophyll a</name>
        <dbReference type="ChEBI" id="CHEBI:58416"/>
        <label>A3</label>
    </ligand>
</feature>
<feature type="binding site" evidence="1">
    <location>
        <position position="695"/>
    </location>
    <ligand>
        <name>phylloquinone</name>
        <dbReference type="ChEBI" id="CHEBI:18067"/>
        <label>A</label>
    </ligand>
</feature>
<feature type="turn" evidence="2">
    <location>
        <begin position="32"/>
        <end position="35"/>
    </location>
</feature>
<feature type="turn" evidence="2">
    <location>
        <begin position="37"/>
        <end position="39"/>
    </location>
</feature>
<feature type="helix" evidence="2">
    <location>
        <begin position="46"/>
        <end position="54"/>
    </location>
</feature>
<feature type="strand" evidence="2">
    <location>
        <begin position="55"/>
        <end position="57"/>
    </location>
</feature>
<feature type="helix" evidence="2">
    <location>
        <begin position="59"/>
        <end position="62"/>
    </location>
</feature>
<feature type="helix" evidence="2">
    <location>
        <begin position="66"/>
        <end position="97"/>
    </location>
</feature>
<feature type="helix" evidence="2">
    <location>
        <begin position="101"/>
        <end position="106"/>
    </location>
</feature>
<feature type="turn" evidence="2">
    <location>
        <begin position="108"/>
        <end position="110"/>
    </location>
</feature>
<feature type="helix" evidence="2">
    <location>
        <begin position="124"/>
        <end position="127"/>
    </location>
</feature>
<feature type="strand" evidence="2">
    <location>
        <begin position="129"/>
        <end position="132"/>
    </location>
</feature>
<feature type="strand" evidence="2">
    <location>
        <begin position="135"/>
        <end position="139"/>
    </location>
</feature>
<feature type="helix" evidence="2">
    <location>
        <begin position="144"/>
        <end position="150"/>
    </location>
</feature>
<feature type="helix" evidence="2">
    <location>
        <begin position="156"/>
        <end position="182"/>
    </location>
</feature>
<feature type="helix" evidence="2">
    <location>
        <begin position="188"/>
        <end position="191"/>
    </location>
</feature>
<feature type="helix" evidence="2">
    <location>
        <begin position="194"/>
        <end position="203"/>
    </location>
</feature>
<feature type="turn" evidence="2">
    <location>
        <begin position="204"/>
        <end position="206"/>
    </location>
</feature>
<feature type="helix" evidence="2">
    <location>
        <begin position="207"/>
        <end position="219"/>
    </location>
</feature>
<feature type="helix" evidence="2">
    <location>
        <begin position="221"/>
        <end position="229"/>
    </location>
</feature>
<feature type="helix" evidence="2">
    <location>
        <begin position="240"/>
        <end position="245"/>
    </location>
</feature>
<feature type="helix" evidence="2">
    <location>
        <begin position="248"/>
        <end position="253"/>
    </location>
</feature>
<feature type="helix" evidence="2">
    <location>
        <begin position="255"/>
        <end position="258"/>
    </location>
</feature>
<feature type="turn" evidence="2">
    <location>
        <begin position="264"/>
        <end position="267"/>
    </location>
</feature>
<feature type="helix" evidence="2">
    <location>
        <begin position="269"/>
        <end position="272"/>
    </location>
</feature>
<feature type="turn" evidence="2">
    <location>
        <begin position="273"/>
        <end position="275"/>
    </location>
</feature>
<feature type="turn" evidence="2">
    <location>
        <begin position="284"/>
        <end position="286"/>
    </location>
</feature>
<feature type="helix" evidence="2">
    <location>
        <begin position="291"/>
        <end position="308"/>
    </location>
</feature>
<feature type="strand" evidence="2">
    <location>
        <begin position="314"/>
        <end position="317"/>
    </location>
</feature>
<feature type="helix" evidence="2">
    <location>
        <begin position="322"/>
        <end position="326"/>
    </location>
</feature>
<feature type="strand" evidence="2">
    <location>
        <begin position="332"/>
        <end position="334"/>
    </location>
</feature>
<feature type="turn" evidence="2">
    <location>
        <begin position="335"/>
        <end position="340"/>
    </location>
</feature>
<feature type="helix" evidence="2">
    <location>
        <begin position="341"/>
        <end position="346"/>
    </location>
</feature>
<feature type="helix" evidence="2">
    <location>
        <begin position="349"/>
        <end position="373"/>
    </location>
</feature>
<feature type="helix" evidence="2">
    <location>
        <begin position="384"/>
        <end position="415"/>
    </location>
</feature>
<feature type="turn" evidence="2">
    <location>
        <begin position="419"/>
        <end position="421"/>
    </location>
</feature>
<feature type="strand" evidence="2">
    <location>
        <begin position="423"/>
        <end position="425"/>
    </location>
</feature>
<feature type="helix" evidence="2">
    <location>
        <begin position="426"/>
        <end position="432"/>
    </location>
</feature>
<feature type="helix" evidence="2">
    <location>
        <begin position="434"/>
        <end position="464"/>
    </location>
</feature>
<feature type="strand" evidence="2">
    <location>
        <begin position="470"/>
        <end position="473"/>
    </location>
</feature>
<feature type="helix" evidence="2">
    <location>
        <begin position="482"/>
        <end position="492"/>
    </location>
</feature>
<feature type="strand" evidence="2">
    <location>
        <begin position="497"/>
        <end position="502"/>
    </location>
</feature>
<feature type="strand" evidence="2">
    <location>
        <begin position="516"/>
        <end position="518"/>
    </location>
</feature>
<feature type="strand" evidence="2">
    <location>
        <begin position="521"/>
        <end position="524"/>
    </location>
</feature>
<feature type="helix" evidence="2">
    <location>
        <begin position="531"/>
        <end position="557"/>
    </location>
</feature>
<feature type="helix" evidence="2">
    <location>
        <begin position="567"/>
        <end position="570"/>
    </location>
</feature>
<feature type="helix" evidence="2">
    <location>
        <begin position="589"/>
        <end position="618"/>
    </location>
</feature>
<feature type="strand" evidence="2">
    <location>
        <begin position="621"/>
        <end position="623"/>
    </location>
</feature>
<feature type="strand" evidence="2">
    <location>
        <begin position="629"/>
        <end position="633"/>
    </location>
</feature>
<feature type="helix" evidence="2">
    <location>
        <begin position="637"/>
        <end position="640"/>
    </location>
</feature>
<feature type="helix" evidence="2">
    <location>
        <begin position="644"/>
        <end position="650"/>
    </location>
</feature>
<feature type="turn" evidence="2">
    <location>
        <begin position="651"/>
        <end position="656"/>
    </location>
</feature>
<feature type="helix" evidence="2">
    <location>
        <begin position="657"/>
        <end position="660"/>
    </location>
</feature>
<feature type="helix" evidence="2">
    <location>
        <begin position="668"/>
        <end position="688"/>
    </location>
</feature>
<feature type="helix" evidence="2">
    <location>
        <begin position="692"/>
        <end position="708"/>
    </location>
</feature>
<feature type="strand" evidence="2">
    <location>
        <begin position="714"/>
        <end position="716"/>
    </location>
</feature>
<feature type="helix" evidence="2">
    <location>
        <begin position="722"/>
        <end position="752"/>
    </location>
</feature>
<accession>B0C474</accession>
<dbReference type="EC" id="1.97.1.12" evidence="1"/>
<dbReference type="EMBL" id="CP000828">
    <property type="protein sequence ID" value="ABW27465.1"/>
    <property type="molecule type" value="Genomic_DNA"/>
</dbReference>
<dbReference type="RefSeq" id="WP_012162929.1">
    <property type="nucleotide sequence ID" value="NC_009925.1"/>
</dbReference>
<dbReference type="PDB" id="7COY">
    <property type="method" value="EM"/>
    <property type="resolution" value="2.50 A"/>
    <property type="chains" value="aA/bA/cA=1-753"/>
</dbReference>
<dbReference type="PDB" id="7DWQ">
    <property type="method" value="EM"/>
    <property type="resolution" value="3.30 A"/>
    <property type="chains" value="A=1-753"/>
</dbReference>
<dbReference type="PDBsum" id="7COY"/>
<dbReference type="PDBsum" id="7DWQ"/>
<dbReference type="EMDB" id="EMD-30420"/>
<dbReference type="EMDB" id="EMD-30882"/>
<dbReference type="SMR" id="B0C474"/>
<dbReference type="STRING" id="329726.AM1_2457"/>
<dbReference type="TCDB" id="5.B.4.1.2">
    <property type="family name" value="the plant photosystem i supercomplex (psi) family"/>
</dbReference>
<dbReference type="KEGG" id="amr:AM1_2457"/>
<dbReference type="eggNOG" id="COG2885">
    <property type="taxonomic scope" value="Bacteria"/>
</dbReference>
<dbReference type="HOGENOM" id="CLU_016126_1_0_3"/>
<dbReference type="OrthoDB" id="499313at2"/>
<dbReference type="Proteomes" id="UP000000268">
    <property type="component" value="Chromosome"/>
</dbReference>
<dbReference type="GO" id="GO:0009522">
    <property type="term" value="C:photosystem I"/>
    <property type="evidence" value="ECO:0007669"/>
    <property type="project" value="UniProtKB-KW"/>
</dbReference>
<dbReference type="GO" id="GO:0031676">
    <property type="term" value="C:plasma membrane-derived thylakoid membrane"/>
    <property type="evidence" value="ECO:0007669"/>
    <property type="project" value="UniProtKB-SubCell"/>
</dbReference>
<dbReference type="GO" id="GO:0051539">
    <property type="term" value="F:4 iron, 4 sulfur cluster binding"/>
    <property type="evidence" value="ECO:0007669"/>
    <property type="project" value="UniProtKB-KW"/>
</dbReference>
<dbReference type="GO" id="GO:0016168">
    <property type="term" value="F:chlorophyll binding"/>
    <property type="evidence" value="ECO:0007669"/>
    <property type="project" value="UniProtKB-KW"/>
</dbReference>
<dbReference type="GO" id="GO:0009055">
    <property type="term" value="F:electron transfer activity"/>
    <property type="evidence" value="ECO:0007669"/>
    <property type="project" value="UniProtKB-UniRule"/>
</dbReference>
<dbReference type="GO" id="GO:0000287">
    <property type="term" value="F:magnesium ion binding"/>
    <property type="evidence" value="ECO:0007669"/>
    <property type="project" value="UniProtKB-UniRule"/>
</dbReference>
<dbReference type="GO" id="GO:0016491">
    <property type="term" value="F:oxidoreductase activity"/>
    <property type="evidence" value="ECO:0007669"/>
    <property type="project" value="UniProtKB-KW"/>
</dbReference>
<dbReference type="GO" id="GO:0015979">
    <property type="term" value="P:photosynthesis"/>
    <property type="evidence" value="ECO:0007669"/>
    <property type="project" value="UniProtKB-UniRule"/>
</dbReference>
<dbReference type="Gene3D" id="1.20.1130.10">
    <property type="entry name" value="Photosystem I PsaA/PsaB"/>
    <property type="match status" value="1"/>
</dbReference>
<dbReference type="HAMAP" id="MF_00458">
    <property type="entry name" value="PSI_PsaA"/>
    <property type="match status" value="1"/>
</dbReference>
<dbReference type="InterPro" id="IPR006243">
    <property type="entry name" value="PSI_PsaA"/>
</dbReference>
<dbReference type="InterPro" id="IPR001280">
    <property type="entry name" value="PSI_PsaA/B"/>
</dbReference>
<dbReference type="InterPro" id="IPR020586">
    <property type="entry name" value="PSI_PsaA/B_CS"/>
</dbReference>
<dbReference type="InterPro" id="IPR036408">
    <property type="entry name" value="PSI_PsaA/B_sf"/>
</dbReference>
<dbReference type="NCBIfam" id="TIGR01335">
    <property type="entry name" value="psaA"/>
    <property type="match status" value="1"/>
</dbReference>
<dbReference type="PANTHER" id="PTHR30128">
    <property type="entry name" value="OUTER MEMBRANE PROTEIN, OMPA-RELATED"/>
    <property type="match status" value="1"/>
</dbReference>
<dbReference type="PANTHER" id="PTHR30128:SF19">
    <property type="entry name" value="PHOTOSYSTEM I P700 CHLOROPHYLL A APOPROTEIN A1-RELATED"/>
    <property type="match status" value="1"/>
</dbReference>
<dbReference type="Pfam" id="PF00223">
    <property type="entry name" value="PsaA_PsaB"/>
    <property type="match status" value="1"/>
</dbReference>
<dbReference type="PIRSF" id="PIRSF002905">
    <property type="entry name" value="PSI_A"/>
    <property type="match status" value="1"/>
</dbReference>
<dbReference type="PRINTS" id="PR00257">
    <property type="entry name" value="PHOTSYSPSAAB"/>
</dbReference>
<dbReference type="SUPFAM" id="SSF81558">
    <property type="entry name" value="Photosystem I subunits PsaA/PsaB"/>
    <property type="match status" value="1"/>
</dbReference>
<dbReference type="PROSITE" id="PS00419">
    <property type="entry name" value="PHOTOSYSTEM_I_PSAAB"/>
    <property type="match status" value="1"/>
</dbReference>
<keyword id="KW-0002">3D-structure</keyword>
<keyword id="KW-0004">4Fe-4S</keyword>
<keyword id="KW-0148">Chlorophyll</keyword>
<keyword id="KW-0157">Chromophore</keyword>
<keyword id="KW-0249">Electron transport</keyword>
<keyword id="KW-0408">Iron</keyword>
<keyword id="KW-0411">Iron-sulfur</keyword>
<keyword id="KW-0460">Magnesium</keyword>
<keyword id="KW-0472">Membrane</keyword>
<keyword id="KW-0479">Metal-binding</keyword>
<keyword id="KW-0560">Oxidoreductase</keyword>
<keyword id="KW-0602">Photosynthesis</keyword>
<keyword id="KW-0603">Photosystem I</keyword>
<keyword id="KW-1185">Reference proteome</keyword>
<keyword id="KW-0793">Thylakoid</keyword>
<keyword id="KW-0812">Transmembrane</keyword>
<keyword id="KW-1133">Transmembrane helix</keyword>
<keyword id="KW-0813">Transport</keyword>
<sequence>MTTSPGGPETKGRTAEVDINPVSASLEVAGKPGHFNKSLSKGPQTTTWIWNLHALAHDFDTQTNDLEEISRKIFSAHFGHLSIIFVWISGMIFHAARFSNYYAWLADPLGNKPSAHVVWPIVGQDILNADVGNGFRGVQITSGLFHILRGAGMTDPGELYSAAIGALVAAVVMMYAGYYHYHKKAPKLEWFQNAESTMTHHLIVLLGLGNLAWTGHLIHVSLPVNKLLDSGVAPQDIPIPHEFLFDNGFMADLYPSFAQGLMPYFTLNWGAYSDFLTFKGGLDPTTGGLWMTDIAHHHLALAVMYIIAGHMYRTNWGIGHSMKEIMESHKGPFTGEGHKGLYEVLTTSWHAQLAINLATWGSFSIIVAHHMYAMPPYPYLATDYGTQLNLFVHHMWIGGFLIVGGAAHAAIFMVRDYDPAVNQNNVLDRMLRHRDTIISHLNWVCIFLGFHSFGLYIHNDNMRSLGRPQDMFSDTAIQLQPIFSQWVQNLQANVAGTIRAPLAEGASSLAWGGDPLFVGGKVAMQHVSLGTADFMIHHIHAFQIHVTVLILIKGVLYARSSRLIPDKANLGFRFPCDGPGRGGTCQSSGWDHIFLGLFWMYNCISIVNFHFFWKMQSDVWGAANANGGVNYLTAGNWAQSSITINGWLRDFLWAQSVQVINSYGSALSAYGILFLGAHFIWAFSLMFLFSGRGYWQELIESIVWAHSKLKIAPAIQPRAMSITQGRAVGLGHYLLGGIVTSWSFYLARILALG</sequence>
<evidence type="ECO:0000255" key="1">
    <source>
        <dbReference type="HAMAP-Rule" id="MF_00458"/>
    </source>
</evidence>
<evidence type="ECO:0007829" key="2">
    <source>
        <dbReference type="PDB" id="7DWQ"/>
    </source>
</evidence>
<comment type="function">
    <text evidence="1">PsaA and PsaB bind P700, the primary electron donor of photosystem I (PSI), as well as the electron acceptors A0, A1 and FX. PSI is a plastocyanin/cytochrome c6-ferredoxin oxidoreductase, converting photonic excitation into a charge separation, which transfers an electron from the donor P700 chlorophyll pair to the spectroscopically characterized acceptors A0, A1, FX, FA and FB in turn. Oxidized P700 is reduced on the lumenal side of the thylakoid membrane by plastocyanin or cytochrome c6.</text>
</comment>
<comment type="catalytic activity">
    <reaction evidence="1">
        <text>reduced [plastocyanin] + hnu + oxidized [2Fe-2S]-[ferredoxin] = oxidized [plastocyanin] + reduced [2Fe-2S]-[ferredoxin]</text>
        <dbReference type="Rhea" id="RHEA:30407"/>
        <dbReference type="Rhea" id="RHEA-COMP:10000"/>
        <dbReference type="Rhea" id="RHEA-COMP:10001"/>
        <dbReference type="Rhea" id="RHEA-COMP:10039"/>
        <dbReference type="Rhea" id="RHEA-COMP:10040"/>
        <dbReference type="ChEBI" id="CHEBI:29036"/>
        <dbReference type="ChEBI" id="CHEBI:30212"/>
        <dbReference type="ChEBI" id="CHEBI:33737"/>
        <dbReference type="ChEBI" id="CHEBI:33738"/>
        <dbReference type="ChEBI" id="CHEBI:49552"/>
        <dbReference type="EC" id="1.97.1.12"/>
    </reaction>
</comment>
<comment type="cofactor">
    <text evidence="1">PSI electron transfer chain: 5 chlorophyll a, 1 chlorophyll a', 2 phylloquinones and 3 4Fe-4S clusters. PSI core antenna: 90 chlorophyll a, 22 carotenoids, 3 phospholipids and 1 galactolipid. P700 is a chlorophyll a/chlorophyll a' dimer, A0 is one or more chlorophyll a, A1 is one or both phylloquinones and FX is a shared 4Fe-4S iron-sulfur center.</text>
</comment>
<comment type="subunit">
    <text evidence="1">The PsaA/B heterodimer binds the P700 chlorophyll special pair and subsequent electron acceptors. PSI consists of a core antenna complex that captures photons, and an electron transfer chain that converts photonic excitation into a charge separation. The cyanobacterial PSI reaction center is composed of one copy each of PsaA,B,C,D,E,F,I,J,K,L,M and X, and forms trimeric complexes.</text>
</comment>
<comment type="subcellular location">
    <subcellularLocation>
        <location evidence="1">Cellular thylakoid membrane</location>
        <topology evidence="1">Multi-pass membrane protein</topology>
    </subcellularLocation>
</comment>
<comment type="similarity">
    <text evidence="1">Belongs to the PsaA/PsaB family.</text>
</comment>
<organism>
    <name type="scientific">Acaryochloris marina (strain MBIC 11017)</name>
    <dbReference type="NCBI Taxonomy" id="329726"/>
    <lineage>
        <taxon>Bacteria</taxon>
        <taxon>Bacillati</taxon>
        <taxon>Cyanobacteriota</taxon>
        <taxon>Cyanophyceae</taxon>
        <taxon>Acaryochloridales</taxon>
        <taxon>Acaryochloridaceae</taxon>
        <taxon>Acaryochloris</taxon>
    </lineage>
</organism>
<gene>
    <name evidence="1" type="primary">psaA</name>
    <name type="ordered locus">AM1_2457</name>
</gene>
<reference key="1">
    <citation type="journal article" date="2008" name="Proc. Natl. Acad. Sci. U.S.A.">
        <title>Niche adaptation and genome expansion in the chlorophyll d-producing cyanobacterium Acaryochloris marina.</title>
        <authorList>
            <person name="Swingley W.D."/>
            <person name="Chen M."/>
            <person name="Cheung P.C."/>
            <person name="Conrad A.L."/>
            <person name="Dejesa L.C."/>
            <person name="Hao J."/>
            <person name="Honchak B.M."/>
            <person name="Karbach L.E."/>
            <person name="Kurdoglu A."/>
            <person name="Lahiri S."/>
            <person name="Mastrian S.D."/>
            <person name="Miyashita H."/>
            <person name="Page L."/>
            <person name="Ramakrishna P."/>
            <person name="Satoh S."/>
            <person name="Sattley W.M."/>
            <person name="Shimada Y."/>
            <person name="Taylor H.L."/>
            <person name="Tomo T."/>
            <person name="Tsuchiya T."/>
            <person name="Wang Z.T."/>
            <person name="Raymond J."/>
            <person name="Mimuro M."/>
            <person name="Blankenship R.E."/>
            <person name="Touchman J.W."/>
        </authorList>
    </citation>
    <scope>NUCLEOTIDE SEQUENCE [LARGE SCALE GENOMIC DNA]</scope>
    <source>
        <strain>MBIC 11017</strain>
    </source>
</reference>